<gene>
    <name evidence="1" type="primary">obg</name>
    <name type="ordered locus">EcSMS35_3479</name>
</gene>
<accession>B1LFT3</accession>
<feature type="chain" id="PRO_0000385914" description="GTPase Obg">
    <location>
        <begin position="1"/>
        <end position="390"/>
    </location>
</feature>
<feature type="domain" description="Obg" evidence="2">
    <location>
        <begin position="1"/>
        <end position="159"/>
    </location>
</feature>
<feature type="domain" description="OBG-type G" evidence="1">
    <location>
        <begin position="160"/>
        <end position="333"/>
    </location>
</feature>
<feature type="region of interest" description="Disordered" evidence="3">
    <location>
        <begin position="127"/>
        <end position="147"/>
    </location>
</feature>
<feature type="compositionally biased region" description="Polar residues" evidence="3">
    <location>
        <begin position="129"/>
        <end position="145"/>
    </location>
</feature>
<feature type="binding site" evidence="1">
    <location>
        <begin position="166"/>
        <end position="173"/>
    </location>
    <ligand>
        <name>GTP</name>
        <dbReference type="ChEBI" id="CHEBI:37565"/>
    </ligand>
</feature>
<feature type="binding site" evidence="1">
    <location>
        <position position="173"/>
    </location>
    <ligand>
        <name>Mg(2+)</name>
        <dbReference type="ChEBI" id="CHEBI:18420"/>
    </ligand>
</feature>
<feature type="binding site" evidence="1">
    <location>
        <begin position="191"/>
        <end position="195"/>
    </location>
    <ligand>
        <name>GTP</name>
        <dbReference type="ChEBI" id="CHEBI:37565"/>
    </ligand>
</feature>
<feature type="binding site" evidence="1">
    <location>
        <position position="193"/>
    </location>
    <ligand>
        <name>Mg(2+)</name>
        <dbReference type="ChEBI" id="CHEBI:18420"/>
    </ligand>
</feature>
<feature type="binding site" evidence="1">
    <location>
        <begin position="213"/>
        <end position="216"/>
    </location>
    <ligand>
        <name>GTP</name>
        <dbReference type="ChEBI" id="CHEBI:37565"/>
    </ligand>
</feature>
<feature type="binding site" evidence="1">
    <location>
        <begin position="283"/>
        <end position="286"/>
    </location>
    <ligand>
        <name>GTP</name>
        <dbReference type="ChEBI" id="CHEBI:37565"/>
    </ligand>
</feature>
<feature type="binding site" evidence="1">
    <location>
        <begin position="314"/>
        <end position="316"/>
    </location>
    <ligand>
        <name>GTP</name>
        <dbReference type="ChEBI" id="CHEBI:37565"/>
    </ligand>
</feature>
<sequence>MKFVDEASILVVAGDGGNGCVSFRREKYIPKGGPDGGDGGDGGDVWMEADENLNTLIDYRFEKSFRAERGQNGASRDCTGKRGKDVTIKVPVGTRVIDQGTGETMGDMTKHGQRLLVAKGGWHGLGNTRFKSSVNRTPRQKTNGTPGDKRELLLELMLLADVGMLGMPNAGKSTFIRAVSAAKPKVADYPFTTLVPSLGVVRMDNEKSFVVADIPGLIEGAAEGAGLGIRFLKHLERCRVLLHLIDIDPIDGTDPVENARIIISELEKYSQDLAAKPRWLVFNKIDLLDKAEAEEKAKAIAEALGWEDKYYLISAASGLGVKDLCWDVMTFIIENPVVQAEEAKQPEKVEFMWDDYHRQQLEEIAEEDDEDWDDDWDEDDEEGVEFIYKR</sequence>
<name>OBG_ECOSM</name>
<dbReference type="EC" id="3.6.5.-" evidence="1"/>
<dbReference type="EMBL" id="CP000970">
    <property type="protein sequence ID" value="ACB19006.1"/>
    <property type="molecule type" value="Genomic_DNA"/>
</dbReference>
<dbReference type="SMR" id="B1LFT3"/>
<dbReference type="KEGG" id="ecm:EcSMS35_3479"/>
<dbReference type="HOGENOM" id="CLU_011747_2_0_6"/>
<dbReference type="Proteomes" id="UP000007011">
    <property type="component" value="Chromosome"/>
</dbReference>
<dbReference type="GO" id="GO:0005737">
    <property type="term" value="C:cytoplasm"/>
    <property type="evidence" value="ECO:0007669"/>
    <property type="project" value="UniProtKB-SubCell"/>
</dbReference>
<dbReference type="GO" id="GO:0005525">
    <property type="term" value="F:GTP binding"/>
    <property type="evidence" value="ECO:0007669"/>
    <property type="project" value="UniProtKB-UniRule"/>
</dbReference>
<dbReference type="GO" id="GO:0003924">
    <property type="term" value="F:GTPase activity"/>
    <property type="evidence" value="ECO:0007669"/>
    <property type="project" value="UniProtKB-UniRule"/>
</dbReference>
<dbReference type="GO" id="GO:0000287">
    <property type="term" value="F:magnesium ion binding"/>
    <property type="evidence" value="ECO:0007669"/>
    <property type="project" value="InterPro"/>
</dbReference>
<dbReference type="GO" id="GO:0042254">
    <property type="term" value="P:ribosome biogenesis"/>
    <property type="evidence" value="ECO:0007669"/>
    <property type="project" value="UniProtKB-UniRule"/>
</dbReference>
<dbReference type="CDD" id="cd01898">
    <property type="entry name" value="Obg"/>
    <property type="match status" value="1"/>
</dbReference>
<dbReference type="FunFam" id="2.70.210.12:FF:000001">
    <property type="entry name" value="GTPase Obg"/>
    <property type="match status" value="1"/>
</dbReference>
<dbReference type="FunFam" id="3.40.50.300:FF:000185">
    <property type="entry name" value="GTPase Obg"/>
    <property type="match status" value="1"/>
</dbReference>
<dbReference type="Gene3D" id="2.70.210.12">
    <property type="entry name" value="GTP1/OBG domain"/>
    <property type="match status" value="1"/>
</dbReference>
<dbReference type="Gene3D" id="3.40.50.300">
    <property type="entry name" value="P-loop containing nucleotide triphosphate hydrolases"/>
    <property type="match status" value="1"/>
</dbReference>
<dbReference type="HAMAP" id="MF_01454">
    <property type="entry name" value="GTPase_Obg"/>
    <property type="match status" value="1"/>
</dbReference>
<dbReference type="InterPro" id="IPR031167">
    <property type="entry name" value="G_OBG"/>
</dbReference>
<dbReference type="InterPro" id="IPR006073">
    <property type="entry name" value="GTP-bd"/>
</dbReference>
<dbReference type="InterPro" id="IPR014100">
    <property type="entry name" value="GTP-bd_Obg/CgtA"/>
</dbReference>
<dbReference type="InterPro" id="IPR006074">
    <property type="entry name" value="GTP1-OBG_CS"/>
</dbReference>
<dbReference type="InterPro" id="IPR006169">
    <property type="entry name" value="GTP1_OBG_dom"/>
</dbReference>
<dbReference type="InterPro" id="IPR036726">
    <property type="entry name" value="GTP1_OBG_dom_sf"/>
</dbReference>
<dbReference type="InterPro" id="IPR045086">
    <property type="entry name" value="OBG_GTPase"/>
</dbReference>
<dbReference type="InterPro" id="IPR027417">
    <property type="entry name" value="P-loop_NTPase"/>
</dbReference>
<dbReference type="NCBIfam" id="TIGR02729">
    <property type="entry name" value="Obg_CgtA"/>
    <property type="match status" value="1"/>
</dbReference>
<dbReference type="NCBIfam" id="NF008955">
    <property type="entry name" value="PRK12297.1"/>
    <property type="match status" value="1"/>
</dbReference>
<dbReference type="NCBIfam" id="NF008956">
    <property type="entry name" value="PRK12299.1"/>
    <property type="match status" value="1"/>
</dbReference>
<dbReference type="PANTHER" id="PTHR11702">
    <property type="entry name" value="DEVELOPMENTALLY REGULATED GTP-BINDING PROTEIN-RELATED"/>
    <property type="match status" value="1"/>
</dbReference>
<dbReference type="PANTHER" id="PTHR11702:SF31">
    <property type="entry name" value="MITOCHONDRIAL RIBOSOME-ASSOCIATED GTPASE 2"/>
    <property type="match status" value="1"/>
</dbReference>
<dbReference type="Pfam" id="PF01018">
    <property type="entry name" value="GTP1_OBG"/>
    <property type="match status" value="1"/>
</dbReference>
<dbReference type="Pfam" id="PF01926">
    <property type="entry name" value="MMR_HSR1"/>
    <property type="match status" value="1"/>
</dbReference>
<dbReference type="PIRSF" id="PIRSF002401">
    <property type="entry name" value="GTP_bd_Obg/CgtA"/>
    <property type="match status" value="1"/>
</dbReference>
<dbReference type="PRINTS" id="PR00326">
    <property type="entry name" value="GTP1OBG"/>
</dbReference>
<dbReference type="SUPFAM" id="SSF82051">
    <property type="entry name" value="Obg GTP-binding protein N-terminal domain"/>
    <property type="match status" value="1"/>
</dbReference>
<dbReference type="SUPFAM" id="SSF52540">
    <property type="entry name" value="P-loop containing nucleoside triphosphate hydrolases"/>
    <property type="match status" value="1"/>
</dbReference>
<dbReference type="PROSITE" id="PS51710">
    <property type="entry name" value="G_OBG"/>
    <property type="match status" value="1"/>
</dbReference>
<dbReference type="PROSITE" id="PS00905">
    <property type="entry name" value="GTP1_OBG"/>
    <property type="match status" value="1"/>
</dbReference>
<dbReference type="PROSITE" id="PS51883">
    <property type="entry name" value="OBG"/>
    <property type="match status" value="1"/>
</dbReference>
<keyword id="KW-0963">Cytoplasm</keyword>
<keyword id="KW-0342">GTP-binding</keyword>
<keyword id="KW-0378">Hydrolase</keyword>
<keyword id="KW-0460">Magnesium</keyword>
<keyword id="KW-0479">Metal-binding</keyword>
<keyword id="KW-0547">Nucleotide-binding</keyword>
<reference key="1">
    <citation type="journal article" date="2008" name="J. Bacteriol.">
        <title>Insights into the environmental resistance gene pool from the genome sequence of the multidrug-resistant environmental isolate Escherichia coli SMS-3-5.</title>
        <authorList>
            <person name="Fricke W.F."/>
            <person name="Wright M.S."/>
            <person name="Lindell A.H."/>
            <person name="Harkins D.M."/>
            <person name="Baker-Austin C."/>
            <person name="Ravel J."/>
            <person name="Stepanauskas R."/>
        </authorList>
    </citation>
    <scope>NUCLEOTIDE SEQUENCE [LARGE SCALE GENOMIC DNA]</scope>
    <source>
        <strain>SMS-3-5 / SECEC</strain>
    </source>
</reference>
<protein>
    <recommendedName>
        <fullName evidence="1">GTPase Obg</fullName>
        <ecNumber evidence="1">3.6.5.-</ecNumber>
    </recommendedName>
    <alternativeName>
        <fullName evidence="1">GTP-binding protein Obg</fullName>
    </alternativeName>
</protein>
<proteinExistence type="inferred from homology"/>
<organism>
    <name type="scientific">Escherichia coli (strain SMS-3-5 / SECEC)</name>
    <dbReference type="NCBI Taxonomy" id="439855"/>
    <lineage>
        <taxon>Bacteria</taxon>
        <taxon>Pseudomonadati</taxon>
        <taxon>Pseudomonadota</taxon>
        <taxon>Gammaproteobacteria</taxon>
        <taxon>Enterobacterales</taxon>
        <taxon>Enterobacteriaceae</taxon>
        <taxon>Escherichia</taxon>
    </lineage>
</organism>
<evidence type="ECO:0000255" key="1">
    <source>
        <dbReference type="HAMAP-Rule" id="MF_01454"/>
    </source>
</evidence>
<evidence type="ECO:0000255" key="2">
    <source>
        <dbReference type="PROSITE-ProRule" id="PRU01231"/>
    </source>
</evidence>
<evidence type="ECO:0000256" key="3">
    <source>
        <dbReference type="SAM" id="MobiDB-lite"/>
    </source>
</evidence>
<comment type="function">
    <text evidence="1">An essential GTPase which binds GTP, GDP and possibly (p)ppGpp with moderate affinity, with high nucleotide exchange rates and a fairly low GTP hydrolysis rate. Plays a role in control of the cell cycle, stress response, ribosome biogenesis and in those bacteria that undergo differentiation, in morphogenesis control.</text>
</comment>
<comment type="cofactor">
    <cofactor evidence="1">
        <name>Mg(2+)</name>
        <dbReference type="ChEBI" id="CHEBI:18420"/>
    </cofactor>
</comment>
<comment type="subunit">
    <text evidence="1">Monomer.</text>
</comment>
<comment type="subcellular location">
    <subcellularLocation>
        <location evidence="1">Cytoplasm</location>
    </subcellularLocation>
</comment>
<comment type="similarity">
    <text evidence="1">Belongs to the TRAFAC class OBG-HflX-like GTPase superfamily. OBG GTPase family.</text>
</comment>